<name>RECXP_PSEPU</name>
<proteinExistence type="inferred from homology"/>
<keyword id="KW-0963">Cytoplasm</keyword>
<keyword id="KW-0614">Plasmid</keyword>
<feature type="chain" id="PRO_0000162460" description="Regulatory protein RecX">
    <location>
        <begin position="1"/>
        <end position="130"/>
    </location>
</feature>
<accession>Q8VMM5</accession>
<geneLocation type="plasmid">
    <name>TOL pWW0</name>
</geneLocation>
<organism>
    <name type="scientific">Pseudomonas putida</name>
    <name type="common">Arthrobacter siderocapsulatus</name>
    <dbReference type="NCBI Taxonomy" id="303"/>
    <lineage>
        <taxon>Bacteria</taxon>
        <taxon>Pseudomonadati</taxon>
        <taxon>Pseudomonadota</taxon>
        <taxon>Gammaproteobacteria</taxon>
        <taxon>Pseudomonadales</taxon>
        <taxon>Pseudomonadaceae</taxon>
        <taxon>Pseudomonas</taxon>
    </lineage>
</organism>
<gene>
    <name type="primary">recX</name>
</gene>
<protein>
    <recommendedName>
        <fullName>Regulatory protein RecX</fullName>
    </recommendedName>
</protein>
<reference key="1">
    <citation type="journal article" date="2002" name="Environ. Microbiol.">
        <title>Complete sequence of the IncP-9 TOL plasmid pWW0 from Pseudomonas putida.</title>
        <authorList>
            <person name="Greated A."/>
            <person name="Lambertsen L."/>
            <person name="Williams P.A."/>
            <person name="Thomas C.M."/>
        </authorList>
    </citation>
    <scope>NUCLEOTIDE SEQUENCE [GENOMIC DNA]</scope>
    <source>
        <strain>PaW1</strain>
    </source>
</reference>
<comment type="function">
    <text evidence="1">Modulates RecA activity.</text>
</comment>
<comment type="subcellular location">
    <subcellularLocation>
        <location evidence="2">Cytoplasm</location>
    </subcellularLocation>
</comment>
<comment type="similarity">
    <text evidence="2">Belongs to the RecX family.</text>
</comment>
<sequence length="130" mass="14256">MTITAQAPAFGNWLTPGDFLNFAKKIWAPVAESNIEAMERKVDELYGAACKRYPTYDTMVQNAFCASMDAAFGTDEQAEGVAEVFAYARDAYGYMSASEREAQRQEDADNGICSHGLDSMTCPCGCFEND</sequence>
<evidence type="ECO:0000250" key="1"/>
<evidence type="ECO:0000305" key="2"/>
<dbReference type="EMBL" id="AJ344068">
    <property type="protein sequence ID" value="CAC86764.1"/>
    <property type="molecule type" value="Genomic_DNA"/>
</dbReference>
<dbReference type="RefSeq" id="NP_542824.1">
    <property type="nucleotide sequence ID" value="NC_003350.1"/>
</dbReference>
<dbReference type="RefSeq" id="WP_011005874.1">
    <property type="nucleotide sequence ID" value="NZ_LT852425.1"/>
</dbReference>
<dbReference type="GO" id="GO:0005737">
    <property type="term" value="C:cytoplasm"/>
    <property type="evidence" value="ECO:0007669"/>
    <property type="project" value="UniProtKB-SubCell"/>
</dbReference>